<feature type="chain" id="PRO_0000278577" description="BRCA1-A complex subunit Abraxas 1">
    <location>
        <begin position="1"/>
        <end position="405"/>
    </location>
</feature>
<feature type="domain" description="MPN" evidence="4">
    <location>
        <begin position="7"/>
        <end position="154"/>
    </location>
</feature>
<feature type="region of interest" description="Disordered" evidence="5">
    <location>
        <begin position="333"/>
        <end position="405"/>
    </location>
</feature>
<feature type="coiled-coil region" evidence="3">
    <location>
        <begin position="208"/>
        <end position="262"/>
    </location>
</feature>
<feature type="short sequence motif" description="pSXXF motif" evidence="6">
    <location>
        <begin position="402"/>
        <end position="405"/>
    </location>
</feature>
<feature type="compositionally biased region" description="Acidic residues" evidence="5">
    <location>
        <begin position="386"/>
        <end position="397"/>
    </location>
</feature>
<feature type="modified residue" description="Phosphoserine" evidence="2">
    <location>
        <position position="48"/>
    </location>
</feature>
<feature type="modified residue" description="Phosphoserine" evidence="1">
    <location>
        <position position="382"/>
    </location>
</feature>
<feature type="modified residue" description="Phosphoserine" evidence="1">
    <location>
        <position position="383"/>
    </location>
</feature>
<feature type="modified residue" description="Phosphoserine" evidence="8">
    <location>
        <position position="392"/>
    </location>
</feature>
<feature type="modified residue" description="Phosphoserine" evidence="1">
    <location>
        <position position="402"/>
    </location>
</feature>
<name>ABRX1_RAT</name>
<dbReference type="EMBL" id="BC088408">
    <property type="protein sequence ID" value="AAH88408.1"/>
    <property type="molecule type" value="mRNA"/>
</dbReference>
<dbReference type="RefSeq" id="NP_001009633.1">
    <property type="nucleotide sequence ID" value="NM_001009633.1"/>
</dbReference>
<dbReference type="SMR" id="Q5I0F1"/>
<dbReference type="FunCoup" id="Q5I0F1">
    <property type="interactions" value="994"/>
</dbReference>
<dbReference type="STRING" id="10116.ENSRNOP00000002956"/>
<dbReference type="iPTMnet" id="Q5I0F1"/>
<dbReference type="PhosphoSitePlus" id="Q5I0F1"/>
<dbReference type="PaxDb" id="10116-ENSRNOP00000002956"/>
<dbReference type="GeneID" id="289468"/>
<dbReference type="KEGG" id="rno:289468"/>
<dbReference type="AGR" id="RGD:1305287"/>
<dbReference type="CTD" id="84142"/>
<dbReference type="RGD" id="1305287">
    <property type="gene designation" value="Abraxas1"/>
</dbReference>
<dbReference type="eggNOG" id="ENOG502QVCD">
    <property type="taxonomic scope" value="Eukaryota"/>
</dbReference>
<dbReference type="InParanoid" id="Q5I0F1"/>
<dbReference type="OrthoDB" id="6358435at2759"/>
<dbReference type="PhylomeDB" id="Q5I0F1"/>
<dbReference type="Reactome" id="R-RNO-5689901">
    <property type="pathway name" value="Metalloprotease DUBs"/>
</dbReference>
<dbReference type="Reactome" id="R-RNO-5693565">
    <property type="pathway name" value="Recruitment and ATM-mediated phosphorylation of repair and signaling proteins at DNA double strand breaks"/>
</dbReference>
<dbReference type="Reactome" id="R-RNO-5693571">
    <property type="pathway name" value="Nonhomologous End-Joining (NHEJ)"/>
</dbReference>
<dbReference type="Reactome" id="R-RNO-5693607">
    <property type="pathway name" value="Processing of DNA double-strand break ends"/>
</dbReference>
<dbReference type="Reactome" id="R-RNO-69473">
    <property type="pathway name" value="G2/M DNA damage checkpoint"/>
</dbReference>
<dbReference type="PRO" id="PR:Q5I0F1"/>
<dbReference type="Proteomes" id="UP000002494">
    <property type="component" value="Unplaced"/>
</dbReference>
<dbReference type="GO" id="GO:0070531">
    <property type="term" value="C:BRCA1-A complex"/>
    <property type="evidence" value="ECO:0000250"/>
    <property type="project" value="UniProtKB"/>
</dbReference>
<dbReference type="GO" id="GO:0005634">
    <property type="term" value="C:nucleus"/>
    <property type="evidence" value="ECO:0000250"/>
    <property type="project" value="UniProtKB"/>
</dbReference>
<dbReference type="GO" id="GO:0008017">
    <property type="term" value="F:microtubule binding"/>
    <property type="evidence" value="ECO:0000318"/>
    <property type="project" value="GO_Central"/>
</dbReference>
<dbReference type="GO" id="GO:0031593">
    <property type="term" value="F:polyubiquitin modification-dependent protein binding"/>
    <property type="evidence" value="ECO:0000250"/>
    <property type="project" value="UniProtKB"/>
</dbReference>
<dbReference type="GO" id="GO:0008608">
    <property type="term" value="P:attachment of spindle microtubules to kinetochore"/>
    <property type="evidence" value="ECO:0000318"/>
    <property type="project" value="GO_Central"/>
</dbReference>
<dbReference type="GO" id="GO:0006325">
    <property type="term" value="P:chromatin organization"/>
    <property type="evidence" value="ECO:0007669"/>
    <property type="project" value="UniProtKB-KW"/>
</dbReference>
<dbReference type="GO" id="GO:0006302">
    <property type="term" value="P:double-strand break repair"/>
    <property type="evidence" value="ECO:0000250"/>
    <property type="project" value="UniProtKB"/>
</dbReference>
<dbReference type="GO" id="GO:0007095">
    <property type="term" value="P:mitotic G2 DNA damage checkpoint signaling"/>
    <property type="evidence" value="ECO:0000250"/>
    <property type="project" value="UniProtKB"/>
</dbReference>
<dbReference type="GO" id="GO:0090307">
    <property type="term" value="P:mitotic spindle assembly"/>
    <property type="evidence" value="ECO:0000318"/>
    <property type="project" value="GO_Central"/>
</dbReference>
<dbReference type="GO" id="GO:0045739">
    <property type="term" value="P:positive regulation of DNA repair"/>
    <property type="evidence" value="ECO:0000250"/>
    <property type="project" value="UniProtKB"/>
</dbReference>
<dbReference type="GO" id="GO:0010212">
    <property type="term" value="P:response to ionizing radiation"/>
    <property type="evidence" value="ECO:0000250"/>
    <property type="project" value="UniProtKB"/>
</dbReference>
<dbReference type="CDD" id="cd23523">
    <property type="entry name" value="Abraxas_1"/>
    <property type="match status" value="1"/>
</dbReference>
<dbReference type="InterPro" id="IPR023239">
    <property type="entry name" value="BRISC_Abraxas1"/>
</dbReference>
<dbReference type="InterPro" id="IPR023238">
    <property type="entry name" value="FAM175"/>
</dbReference>
<dbReference type="InterPro" id="IPR037518">
    <property type="entry name" value="MPN"/>
</dbReference>
<dbReference type="PANTHER" id="PTHR31728">
    <property type="entry name" value="ABRAXAS FAMILY MEMBER"/>
    <property type="match status" value="1"/>
</dbReference>
<dbReference type="PANTHER" id="PTHR31728:SF2">
    <property type="entry name" value="BRCA1-A COMPLEX SUBUNIT ABRAXAS 1"/>
    <property type="match status" value="1"/>
</dbReference>
<dbReference type="Pfam" id="PF21125">
    <property type="entry name" value="MPN_2A_DUB_like"/>
    <property type="match status" value="1"/>
</dbReference>
<dbReference type="PRINTS" id="PR02052">
    <property type="entry name" value="ABRAXAS"/>
</dbReference>
<dbReference type="PRINTS" id="PR02051">
    <property type="entry name" value="PROTEINF175"/>
</dbReference>
<dbReference type="PROSITE" id="PS50249">
    <property type="entry name" value="MPN"/>
    <property type="match status" value="1"/>
</dbReference>
<proteinExistence type="evidence at protein level"/>
<keyword id="KW-0156">Chromatin regulator</keyword>
<keyword id="KW-0175">Coiled coil</keyword>
<keyword id="KW-0227">DNA damage</keyword>
<keyword id="KW-0234">DNA repair</keyword>
<keyword id="KW-0539">Nucleus</keyword>
<keyword id="KW-0597">Phosphoprotein</keyword>
<keyword id="KW-1185">Reference proteome</keyword>
<organism>
    <name type="scientific">Rattus norvegicus</name>
    <name type="common">Rat</name>
    <dbReference type="NCBI Taxonomy" id="10116"/>
    <lineage>
        <taxon>Eukaryota</taxon>
        <taxon>Metazoa</taxon>
        <taxon>Chordata</taxon>
        <taxon>Craniata</taxon>
        <taxon>Vertebrata</taxon>
        <taxon>Euteleostomi</taxon>
        <taxon>Mammalia</taxon>
        <taxon>Eutheria</taxon>
        <taxon>Euarchontoglires</taxon>
        <taxon>Glires</taxon>
        <taxon>Rodentia</taxon>
        <taxon>Myomorpha</taxon>
        <taxon>Muroidea</taxon>
        <taxon>Muridae</taxon>
        <taxon>Murinae</taxon>
        <taxon>Rattus</taxon>
    </lineage>
</organism>
<protein>
    <recommendedName>
        <fullName evidence="7">BRCA1-A complex subunit Abraxas 1</fullName>
    </recommendedName>
    <alternativeName>
        <fullName>Coiled-coil domain-containing protein 98</fullName>
    </alternativeName>
    <alternativeName>
        <fullName>Protein FAM175A</fullName>
    </alternativeName>
</protein>
<evidence type="ECO:0000250" key="1">
    <source>
        <dbReference type="UniProtKB" id="Q6UWZ7"/>
    </source>
</evidence>
<evidence type="ECO:0000250" key="2">
    <source>
        <dbReference type="UniProtKB" id="Q8BPZ8"/>
    </source>
</evidence>
<evidence type="ECO:0000255" key="3"/>
<evidence type="ECO:0000255" key="4">
    <source>
        <dbReference type="PROSITE-ProRule" id="PRU01182"/>
    </source>
</evidence>
<evidence type="ECO:0000256" key="5">
    <source>
        <dbReference type="SAM" id="MobiDB-lite"/>
    </source>
</evidence>
<evidence type="ECO:0000305" key="6"/>
<evidence type="ECO:0000312" key="7">
    <source>
        <dbReference type="RGD" id="1305287"/>
    </source>
</evidence>
<evidence type="ECO:0007744" key="8">
    <source>
    </source>
</evidence>
<reference key="1">
    <citation type="journal article" date="2004" name="Genome Res.">
        <title>The status, quality, and expansion of the NIH full-length cDNA project: the Mammalian Gene Collection (MGC).</title>
        <authorList>
            <consortium name="The MGC Project Team"/>
        </authorList>
    </citation>
    <scope>NUCLEOTIDE SEQUENCE [LARGE SCALE MRNA]</scope>
    <source>
        <tissue>Testis</tissue>
    </source>
</reference>
<reference key="2">
    <citation type="journal article" date="2012" name="Nat. Commun.">
        <title>Quantitative maps of protein phosphorylation sites across 14 different rat organs and tissues.</title>
        <authorList>
            <person name="Lundby A."/>
            <person name="Secher A."/>
            <person name="Lage K."/>
            <person name="Nordsborg N.B."/>
            <person name="Dmytriyev A."/>
            <person name="Lundby C."/>
            <person name="Olsen J.V."/>
        </authorList>
    </citation>
    <scope>PHOSPHORYLATION [LARGE SCALE ANALYSIS] AT SER-392</scope>
    <scope>IDENTIFICATION BY MASS SPECTROMETRY [LARGE SCALE ANALYSIS]</scope>
</reference>
<sequence length="405" mass="45690">MEGESTLGVLSGFVLGALTFQHLNTDSDTEGLLLGEMKGEAKNSITDSQMDSVKVVYTIDIQKYIPCYRLFSFYNSLGEVNEHALKKILSNVKKTVVGWYKFRRHSDQIMTFREQLLHRNLQTHLSSPELVFLLLTPSITTESCCTHCLEHGLYKPQSGLFHKVPLVVTNLGMSDQLGYKTESVSCTSTVFSRAVRTYSSQFFNEDGSLKEVRKINEMYAAIQEELKTICQKVEQSEREVEKLLMDVNRLKEVRKKQQAQAKGAGEKSQNHPQENILLCQALRTFFPESRVLHSCVISLKNRHISHSGCNTDHHLDVVDKLTLMVEYVYSPEASPAPAAPLSKRKALDTQDQWPAKRPRLLESESRPGPAFRGSHQDKASSSSLDIDTEVGSPEDDTDYPRSPTF</sequence>
<gene>
    <name evidence="7" type="primary">ABRAXAS1</name>
    <name type="synonym">Abra1</name>
    <name type="synonym">Ccdc98</name>
    <name type="synonym">Fam175a</name>
</gene>
<comment type="function">
    <text evidence="1">Involved in DNA damage response and double-strand break (DSB) repair. Component of the BRCA1-A complex, acting as a central scaffold protein that assembles the various components of the complex and mediates the recruitment of BRCA1. The BRCA1-A complex specifically recognizes 'Lys-63'-linked ubiquitinated histones H2A and H2AX at DNA lesion sites, leading to target the BRCA1-BARD1 heterodimer to sites of DNA damage at DSBs. This complex also possesses deubiquitinase activity that specifically removes 'Lys-63'-linked ubiquitin on histones H2A and H2AX.</text>
</comment>
<comment type="subunit">
    <text evidence="1">Component of the ARISC complex, at least composed of UIMC1/RAP80, ABRAXAS1, BRCC3/BRCC36, BABAM2 and BABAM1/NBA1. Component of the BRCA1-A complex, at least composed of the BRCA1, BARD1, UIMC1/RAP80, ABRAXAS1, BRCC3/BRCC36, BABAM2 and BABAM1/NBA1. In the complex, interacts directly with UIMC1/RAP80, BRCC3/BRCC36 and BABAM2. Homodimer. Interacts directly (when phosphorylated at Ser-402) with BRCA1. The phosphorylated homodimer can interact directly with two BRCA1 chains, giving rise to a heterotetramer. Binds polyubiquitin.</text>
</comment>
<comment type="subcellular location">
    <subcellularLocation>
        <location evidence="1">Nucleus</location>
    </subcellularLocation>
    <text evidence="1">Localizes at sites of DNA damage at double-strand breaks (DSBs).</text>
</comment>
<comment type="PTM">
    <text evidence="1">Phosphorylation of Ser-402 of the pSXXF motif by ATM or ATR constitutes a specific recognition motif for the BRCT domain of BRCA1.</text>
</comment>
<comment type="similarity">
    <text evidence="6">Belongs to the FAM175 family. Abraxas subfamily.</text>
</comment>
<accession>Q5I0F1</accession>